<name>YD183_YEAST</name>
<dbReference type="EMBL" id="X83276">
    <property type="protein sequence ID" value="CAA58263.1"/>
    <property type="molecule type" value="Genomic_DNA"/>
</dbReference>
<dbReference type="EMBL" id="Z74231">
    <property type="protein sequence ID" value="CAA98758.1"/>
    <property type="molecule type" value="Genomic_DNA"/>
</dbReference>
<dbReference type="EMBL" id="AY692579">
    <property type="protein sequence ID" value="AAT92598.1"/>
    <property type="molecule type" value="Genomic_DNA"/>
</dbReference>
<dbReference type="EMBL" id="BK006938">
    <property type="protein sequence ID" value="DAA11679.1"/>
    <property type="molecule type" value="Genomic_DNA"/>
</dbReference>
<dbReference type="PIR" id="S58734">
    <property type="entry name" value="S58734"/>
</dbReference>
<dbReference type="BioGRID" id="31861">
    <property type="interactions" value="102"/>
</dbReference>
<dbReference type="DIP" id="DIP-5463N"/>
<dbReference type="FunCoup" id="P48569">
    <property type="interactions" value="11"/>
</dbReference>
<dbReference type="STRING" id="4932.YDL183C"/>
<dbReference type="PaxDb" id="4932-YDL183C"/>
<dbReference type="PeptideAtlas" id="P48569"/>
<dbReference type="EnsemblFungi" id="YDL183C_mRNA">
    <property type="protein sequence ID" value="YDL183C"/>
    <property type="gene ID" value="YDL183C"/>
</dbReference>
<dbReference type="KEGG" id="sce:YDL183C"/>
<dbReference type="AGR" id="SGD:S000002342"/>
<dbReference type="SGD" id="S000002342">
    <property type="gene designation" value="YDL183C"/>
</dbReference>
<dbReference type="VEuPathDB" id="FungiDB:YDL183C"/>
<dbReference type="eggNOG" id="KOG4539">
    <property type="taxonomic scope" value="Eukaryota"/>
</dbReference>
<dbReference type="HOGENOM" id="CLU_043838_0_1_1"/>
<dbReference type="InParanoid" id="P48569"/>
<dbReference type="OMA" id="PGFYLTY"/>
<dbReference type="OrthoDB" id="5562676at2759"/>
<dbReference type="BioCyc" id="YEAST:G3O-29569-MONOMER"/>
<dbReference type="BioGRID-ORCS" id="851345">
    <property type="hits" value="0 hits in 10 CRISPR screens"/>
</dbReference>
<dbReference type="PRO" id="PR:P48569"/>
<dbReference type="Proteomes" id="UP000002311">
    <property type="component" value="Chromosome IV"/>
</dbReference>
<dbReference type="RNAct" id="P48569">
    <property type="molecule type" value="protein"/>
</dbReference>
<dbReference type="GO" id="GO:0005743">
    <property type="term" value="C:mitochondrial inner membrane"/>
    <property type="evidence" value="ECO:0000314"/>
    <property type="project" value="SGD"/>
</dbReference>
<dbReference type="GO" id="GO:0006813">
    <property type="term" value="P:potassium ion transport"/>
    <property type="evidence" value="ECO:0000316"/>
    <property type="project" value="SGD"/>
</dbReference>
<dbReference type="GO" id="GO:1902600">
    <property type="term" value="P:proton transmembrane transport"/>
    <property type="evidence" value="ECO:0000316"/>
    <property type="project" value="SGD"/>
</dbReference>
<dbReference type="InterPro" id="IPR018786">
    <property type="entry name" value="Mit_KHE1"/>
</dbReference>
<dbReference type="PANTHER" id="PTHR28062">
    <property type="entry name" value="K+-H+ EXCHANGE-LIKE PROTEIN"/>
    <property type="match status" value="1"/>
</dbReference>
<dbReference type="PANTHER" id="PTHR28062:SF1">
    <property type="entry name" value="TRANSMEMBRANE PROTEIN"/>
    <property type="match status" value="1"/>
</dbReference>
<dbReference type="Pfam" id="PF10173">
    <property type="entry name" value="Mit_KHE1"/>
    <property type="match status" value="1"/>
</dbReference>
<gene>
    <name type="ordered locus">YDL183C</name>
    <name type="ORF">D1293</name>
</gene>
<accession>P48569</accession>
<accession>D6VRG9</accession>
<feature type="chain" id="PRO_0000202590" description="Uncharacterized protein YDL183C">
    <location>
        <begin position="1"/>
        <end position="320"/>
    </location>
</feature>
<keyword id="KW-1185">Reference proteome</keyword>
<proteinExistence type="predicted"/>
<sequence length="320" mass="37047">MIRSIFIPPTSITATSRLFYGMRAYSTKLEKASLQKYLHDPVKVTVIPITDKESFIYYKHTDNLFNSQSRILKAEKWIVEKSAKLWRKLKKSPKSYNKKIVSMVQSLLNSTPWSENSLLTIPSESYILKRIKGEKDKTQEIRLTLKDYTVKAEQVDTQPLHVYYPPGISSPDECLRQMKKLYQEGLIYHKKWTLYCLLGLPLTIPLILIPLIPNVPGFYLSYRAYVNIKAYLGAKHLKSLLESSKQNLEFRELLGYTEVYKRGTSSRTQGNQKESKGAPELLLNKKTLPLILDFLEVHELESDLNKVILQESKSQEKNKI</sequence>
<evidence type="ECO:0000305" key="1"/>
<protein>
    <recommendedName>
        <fullName>Uncharacterized protein YDL183C</fullName>
    </recommendedName>
</protein>
<comment type="similarity">
    <text evidence="1">To S.pombe SpAC23H3.12c.</text>
</comment>
<reference key="1">
    <citation type="journal article" date="1995" name="Yeast">
        <title>New open reading frames, one of which is similar to the nifV gene of Azotobacter vinelandii, found on a 12.5 kbp fragment of chromosome IV of Saccharomyces cerevisiae.</title>
        <authorList>
            <person name="Verhasselt P."/>
            <person name="Voet M."/>
            <person name="Volckaert G."/>
        </authorList>
    </citation>
    <scope>NUCLEOTIDE SEQUENCE [GENOMIC DNA]</scope>
    <source>
        <strain>ATCC 96604 / S288c / FY1679</strain>
    </source>
</reference>
<reference key="2">
    <citation type="journal article" date="1997" name="Nature">
        <title>The nucleotide sequence of Saccharomyces cerevisiae chromosome IV.</title>
        <authorList>
            <person name="Jacq C."/>
            <person name="Alt-Moerbe J."/>
            <person name="Andre B."/>
            <person name="Arnold W."/>
            <person name="Bahr A."/>
            <person name="Ballesta J.P.G."/>
            <person name="Bargues M."/>
            <person name="Baron L."/>
            <person name="Becker A."/>
            <person name="Biteau N."/>
            <person name="Bloecker H."/>
            <person name="Blugeon C."/>
            <person name="Boskovic J."/>
            <person name="Brandt P."/>
            <person name="Brueckner M."/>
            <person name="Buitrago M.J."/>
            <person name="Coster F."/>
            <person name="Delaveau T."/>
            <person name="del Rey F."/>
            <person name="Dujon B."/>
            <person name="Eide L.G."/>
            <person name="Garcia-Cantalejo J.M."/>
            <person name="Goffeau A."/>
            <person name="Gomez-Peris A."/>
            <person name="Granotier C."/>
            <person name="Hanemann V."/>
            <person name="Hankeln T."/>
            <person name="Hoheisel J.D."/>
            <person name="Jaeger W."/>
            <person name="Jimenez A."/>
            <person name="Jonniaux J.-L."/>
            <person name="Kraemer C."/>
            <person name="Kuester H."/>
            <person name="Laamanen P."/>
            <person name="Legros Y."/>
            <person name="Louis E.J."/>
            <person name="Moeller-Rieker S."/>
            <person name="Monnet A."/>
            <person name="Moro M."/>
            <person name="Mueller-Auer S."/>
            <person name="Nussbaumer B."/>
            <person name="Paricio N."/>
            <person name="Paulin L."/>
            <person name="Perea J."/>
            <person name="Perez-Alonso M."/>
            <person name="Perez-Ortin J.E."/>
            <person name="Pohl T.M."/>
            <person name="Prydz H."/>
            <person name="Purnelle B."/>
            <person name="Rasmussen S.W."/>
            <person name="Remacha M.A."/>
            <person name="Revuelta J.L."/>
            <person name="Rieger M."/>
            <person name="Salom D."/>
            <person name="Saluz H.P."/>
            <person name="Saiz J.E."/>
            <person name="Saren A.-M."/>
            <person name="Schaefer M."/>
            <person name="Scharfe M."/>
            <person name="Schmidt E.R."/>
            <person name="Schneider C."/>
            <person name="Scholler P."/>
            <person name="Schwarz S."/>
            <person name="Soler-Mira A."/>
            <person name="Urrestarazu L.A."/>
            <person name="Verhasselt P."/>
            <person name="Vissers S."/>
            <person name="Voet M."/>
            <person name="Volckaert G."/>
            <person name="Wagner G."/>
            <person name="Wambutt R."/>
            <person name="Wedler E."/>
            <person name="Wedler H."/>
            <person name="Woelfl S."/>
            <person name="Harris D.E."/>
            <person name="Bowman S."/>
            <person name="Brown D."/>
            <person name="Churcher C.M."/>
            <person name="Connor R."/>
            <person name="Dedman K."/>
            <person name="Gentles S."/>
            <person name="Hamlin N."/>
            <person name="Hunt S."/>
            <person name="Jones L."/>
            <person name="McDonald S."/>
            <person name="Murphy L.D."/>
            <person name="Niblett D."/>
            <person name="Odell C."/>
            <person name="Oliver K."/>
            <person name="Rajandream M.A."/>
            <person name="Richards C."/>
            <person name="Shore L."/>
            <person name="Walsh S.V."/>
            <person name="Barrell B.G."/>
            <person name="Dietrich F.S."/>
            <person name="Mulligan J.T."/>
            <person name="Allen E."/>
            <person name="Araujo R."/>
            <person name="Aviles E."/>
            <person name="Berno A."/>
            <person name="Carpenter J."/>
            <person name="Chen E."/>
            <person name="Cherry J.M."/>
            <person name="Chung E."/>
            <person name="Duncan M."/>
            <person name="Hunicke-Smith S."/>
            <person name="Hyman R.W."/>
            <person name="Komp C."/>
            <person name="Lashkari D."/>
            <person name="Lew H."/>
            <person name="Lin D."/>
            <person name="Mosedale D."/>
            <person name="Nakahara K."/>
            <person name="Namath A."/>
            <person name="Oefner P."/>
            <person name="Oh C."/>
            <person name="Petel F.X."/>
            <person name="Roberts D."/>
            <person name="Schramm S."/>
            <person name="Schroeder M."/>
            <person name="Shogren T."/>
            <person name="Shroff N."/>
            <person name="Winant A."/>
            <person name="Yelton M.A."/>
            <person name="Botstein D."/>
            <person name="Davis R.W."/>
            <person name="Johnston M."/>
            <person name="Andrews S."/>
            <person name="Brinkman R."/>
            <person name="Cooper J."/>
            <person name="Ding H."/>
            <person name="Du Z."/>
            <person name="Favello A."/>
            <person name="Fulton L."/>
            <person name="Gattung S."/>
            <person name="Greco T."/>
            <person name="Hallsworth K."/>
            <person name="Hawkins J."/>
            <person name="Hillier L.W."/>
            <person name="Jier M."/>
            <person name="Johnson D."/>
            <person name="Johnston L."/>
            <person name="Kirsten J."/>
            <person name="Kucaba T."/>
            <person name="Langston Y."/>
            <person name="Latreille P."/>
            <person name="Le T."/>
            <person name="Mardis E."/>
            <person name="Menezes S."/>
            <person name="Miller N."/>
            <person name="Nhan M."/>
            <person name="Pauley A."/>
            <person name="Peluso D."/>
            <person name="Rifkin L."/>
            <person name="Riles L."/>
            <person name="Taich A."/>
            <person name="Trevaskis E."/>
            <person name="Vignati D."/>
            <person name="Wilcox L."/>
            <person name="Wohldman P."/>
            <person name="Vaudin M."/>
            <person name="Wilson R."/>
            <person name="Waterston R."/>
            <person name="Albermann K."/>
            <person name="Hani J."/>
            <person name="Heumann K."/>
            <person name="Kleine K."/>
            <person name="Mewes H.-W."/>
            <person name="Zollner A."/>
            <person name="Zaccaria P."/>
        </authorList>
    </citation>
    <scope>NUCLEOTIDE SEQUENCE [LARGE SCALE GENOMIC DNA]</scope>
    <source>
        <strain>ATCC 204508 / S288c</strain>
    </source>
</reference>
<reference key="3">
    <citation type="journal article" date="2014" name="G3 (Bethesda)">
        <title>The reference genome sequence of Saccharomyces cerevisiae: Then and now.</title>
        <authorList>
            <person name="Engel S.R."/>
            <person name="Dietrich F.S."/>
            <person name="Fisk D.G."/>
            <person name="Binkley G."/>
            <person name="Balakrishnan R."/>
            <person name="Costanzo M.C."/>
            <person name="Dwight S.S."/>
            <person name="Hitz B.C."/>
            <person name="Karra K."/>
            <person name="Nash R.S."/>
            <person name="Weng S."/>
            <person name="Wong E.D."/>
            <person name="Lloyd P."/>
            <person name="Skrzypek M.S."/>
            <person name="Miyasato S.R."/>
            <person name="Simison M."/>
            <person name="Cherry J.M."/>
        </authorList>
    </citation>
    <scope>GENOME REANNOTATION</scope>
    <source>
        <strain>ATCC 204508 / S288c</strain>
    </source>
</reference>
<reference key="4">
    <citation type="journal article" date="2007" name="Genome Res.">
        <title>Approaching a complete repository of sequence-verified protein-encoding clones for Saccharomyces cerevisiae.</title>
        <authorList>
            <person name="Hu Y."/>
            <person name="Rolfs A."/>
            <person name="Bhullar B."/>
            <person name="Murthy T.V.S."/>
            <person name="Zhu C."/>
            <person name="Berger M.F."/>
            <person name="Camargo A.A."/>
            <person name="Kelley F."/>
            <person name="McCarron S."/>
            <person name="Jepson D."/>
            <person name="Richardson A."/>
            <person name="Raphael J."/>
            <person name="Moreira D."/>
            <person name="Taycher E."/>
            <person name="Zuo D."/>
            <person name="Mohr S."/>
            <person name="Kane M.F."/>
            <person name="Williamson J."/>
            <person name="Simpson A.J.G."/>
            <person name="Bulyk M.L."/>
            <person name="Harlow E."/>
            <person name="Marsischky G."/>
            <person name="Kolodner R.D."/>
            <person name="LaBaer J."/>
        </authorList>
    </citation>
    <scope>NUCLEOTIDE SEQUENCE [GENOMIC DNA]</scope>
    <source>
        <strain>ATCC 204508 / S288c</strain>
    </source>
</reference>
<organism>
    <name type="scientific">Saccharomyces cerevisiae (strain ATCC 204508 / S288c)</name>
    <name type="common">Baker's yeast</name>
    <dbReference type="NCBI Taxonomy" id="559292"/>
    <lineage>
        <taxon>Eukaryota</taxon>
        <taxon>Fungi</taxon>
        <taxon>Dikarya</taxon>
        <taxon>Ascomycota</taxon>
        <taxon>Saccharomycotina</taxon>
        <taxon>Saccharomycetes</taxon>
        <taxon>Saccharomycetales</taxon>
        <taxon>Saccharomycetaceae</taxon>
        <taxon>Saccharomyces</taxon>
    </lineage>
</organism>